<gene>
    <name evidence="1" type="primary">panD</name>
    <name type="ordered locus">Hhal_0673</name>
</gene>
<sequence length="126" mass="14095">MQLNMLKGKLHQARVTQTELEYEGSCAIDLDLLEAVGIHEYEQIHVYNIENGERFVTYAIIGERGSRMISMNGAAAHKCNEGDRVIICAYAGVPESELGEFQPRLAYLDADNRITQRRGSIPLQVA</sequence>
<feature type="chain" id="PRO_0000306993" description="Aspartate 1-decarboxylase beta chain" evidence="1">
    <location>
        <begin position="1"/>
        <end position="24"/>
    </location>
</feature>
<feature type="chain" id="PRO_0000306994" description="Aspartate 1-decarboxylase alpha chain" evidence="1">
    <location>
        <begin position="25"/>
        <end position="126"/>
    </location>
</feature>
<feature type="active site" description="Schiff-base intermediate with substrate; via pyruvic acid" evidence="1">
    <location>
        <position position="25"/>
    </location>
</feature>
<feature type="active site" description="Proton donor" evidence="1">
    <location>
        <position position="58"/>
    </location>
</feature>
<feature type="binding site" evidence="1">
    <location>
        <position position="57"/>
    </location>
    <ligand>
        <name>substrate</name>
    </ligand>
</feature>
<feature type="binding site" evidence="1">
    <location>
        <begin position="73"/>
        <end position="75"/>
    </location>
    <ligand>
        <name>substrate</name>
    </ligand>
</feature>
<feature type="modified residue" description="Pyruvic acid (Ser)" evidence="1">
    <location>
        <position position="25"/>
    </location>
</feature>
<name>PAND_HALHL</name>
<keyword id="KW-0068">Autocatalytic cleavage</keyword>
<keyword id="KW-0963">Cytoplasm</keyword>
<keyword id="KW-0210">Decarboxylase</keyword>
<keyword id="KW-0456">Lyase</keyword>
<keyword id="KW-0566">Pantothenate biosynthesis</keyword>
<keyword id="KW-0670">Pyruvate</keyword>
<keyword id="KW-1185">Reference proteome</keyword>
<keyword id="KW-0704">Schiff base</keyword>
<keyword id="KW-0865">Zymogen</keyword>
<evidence type="ECO:0000255" key="1">
    <source>
        <dbReference type="HAMAP-Rule" id="MF_00446"/>
    </source>
</evidence>
<reference key="1">
    <citation type="submission" date="2006-12" db="EMBL/GenBank/DDBJ databases">
        <title>Complete sequence of Halorhodospira halophila SL1.</title>
        <authorList>
            <consortium name="US DOE Joint Genome Institute"/>
            <person name="Copeland A."/>
            <person name="Lucas S."/>
            <person name="Lapidus A."/>
            <person name="Barry K."/>
            <person name="Detter J.C."/>
            <person name="Glavina del Rio T."/>
            <person name="Hammon N."/>
            <person name="Israni S."/>
            <person name="Dalin E."/>
            <person name="Tice H."/>
            <person name="Pitluck S."/>
            <person name="Saunders E."/>
            <person name="Brettin T."/>
            <person name="Bruce D."/>
            <person name="Han C."/>
            <person name="Tapia R."/>
            <person name="Schmutz J."/>
            <person name="Larimer F."/>
            <person name="Land M."/>
            <person name="Hauser L."/>
            <person name="Kyrpides N."/>
            <person name="Mikhailova N."/>
            <person name="Hoff W."/>
            <person name="Richardson P."/>
        </authorList>
    </citation>
    <scope>NUCLEOTIDE SEQUENCE [LARGE SCALE GENOMIC DNA]</scope>
    <source>
        <strain>DSM 244 / SL1</strain>
    </source>
</reference>
<dbReference type="EC" id="4.1.1.11" evidence="1"/>
<dbReference type="EMBL" id="CP000544">
    <property type="protein sequence ID" value="ABM61455.1"/>
    <property type="molecule type" value="Genomic_DNA"/>
</dbReference>
<dbReference type="RefSeq" id="WP_011813478.1">
    <property type="nucleotide sequence ID" value="NC_008789.1"/>
</dbReference>
<dbReference type="SMR" id="A1WUU3"/>
<dbReference type="STRING" id="349124.Hhal_0673"/>
<dbReference type="KEGG" id="hha:Hhal_0673"/>
<dbReference type="eggNOG" id="COG0853">
    <property type="taxonomic scope" value="Bacteria"/>
</dbReference>
<dbReference type="HOGENOM" id="CLU_115305_2_1_6"/>
<dbReference type="OrthoDB" id="9803983at2"/>
<dbReference type="UniPathway" id="UPA00028">
    <property type="reaction ID" value="UER00002"/>
</dbReference>
<dbReference type="Proteomes" id="UP000000647">
    <property type="component" value="Chromosome"/>
</dbReference>
<dbReference type="GO" id="GO:0005829">
    <property type="term" value="C:cytosol"/>
    <property type="evidence" value="ECO:0007669"/>
    <property type="project" value="TreeGrafter"/>
</dbReference>
<dbReference type="GO" id="GO:0004068">
    <property type="term" value="F:aspartate 1-decarboxylase activity"/>
    <property type="evidence" value="ECO:0007669"/>
    <property type="project" value="UniProtKB-UniRule"/>
</dbReference>
<dbReference type="GO" id="GO:0006523">
    <property type="term" value="P:alanine biosynthetic process"/>
    <property type="evidence" value="ECO:0007669"/>
    <property type="project" value="InterPro"/>
</dbReference>
<dbReference type="GO" id="GO:0015940">
    <property type="term" value="P:pantothenate biosynthetic process"/>
    <property type="evidence" value="ECO:0007669"/>
    <property type="project" value="UniProtKB-UniRule"/>
</dbReference>
<dbReference type="CDD" id="cd06919">
    <property type="entry name" value="Asp_decarbox"/>
    <property type="match status" value="1"/>
</dbReference>
<dbReference type="Gene3D" id="2.40.40.20">
    <property type="match status" value="1"/>
</dbReference>
<dbReference type="HAMAP" id="MF_00446">
    <property type="entry name" value="PanD"/>
    <property type="match status" value="1"/>
</dbReference>
<dbReference type="InterPro" id="IPR009010">
    <property type="entry name" value="Asp_de-COase-like_dom_sf"/>
</dbReference>
<dbReference type="InterPro" id="IPR003190">
    <property type="entry name" value="Asp_decarbox"/>
</dbReference>
<dbReference type="NCBIfam" id="TIGR00223">
    <property type="entry name" value="panD"/>
    <property type="match status" value="1"/>
</dbReference>
<dbReference type="PANTHER" id="PTHR21012">
    <property type="entry name" value="ASPARTATE 1-DECARBOXYLASE"/>
    <property type="match status" value="1"/>
</dbReference>
<dbReference type="PANTHER" id="PTHR21012:SF0">
    <property type="entry name" value="ASPARTATE 1-DECARBOXYLASE"/>
    <property type="match status" value="1"/>
</dbReference>
<dbReference type="Pfam" id="PF02261">
    <property type="entry name" value="Asp_decarbox"/>
    <property type="match status" value="1"/>
</dbReference>
<dbReference type="PIRSF" id="PIRSF006246">
    <property type="entry name" value="Asp_decarbox"/>
    <property type="match status" value="1"/>
</dbReference>
<dbReference type="SUPFAM" id="SSF50692">
    <property type="entry name" value="ADC-like"/>
    <property type="match status" value="1"/>
</dbReference>
<protein>
    <recommendedName>
        <fullName evidence="1">Aspartate 1-decarboxylase</fullName>
        <ecNumber evidence="1">4.1.1.11</ecNumber>
    </recommendedName>
    <alternativeName>
        <fullName evidence="1">Aspartate alpha-decarboxylase</fullName>
    </alternativeName>
    <component>
        <recommendedName>
            <fullName evidence="1">Aspartate 1-decarboxylase beta chain</fullName>
        </recommendedName>
    </component>
    <component>
        <recommendedName>
            <fullName evidence="1">Aspartate 1-decarboxylase alpha chain</fullName>
        </recommendedName>
    </component>
</protein>
<proteinExistence type="inferred from homology"/>
<organism>
    <name type="scientific">Halorhodospira halophila (strain DSM 244 / SL1)</name>
    <name type="common">Ectothiorhodospira halophila (strain DSM 244 / SL1)</name>
    <dbReference type="NCBI Taxonomy" id="349124"/>
    <lineage>
        <taxon>Bacteria</taxon>
        <taxon>Pseudomonadati</taxon>
        <taxon>Pseudomonadota</taxon>
        <taxon>Gammaproteobacteria</taxon>
        <taxon>Chromatiales</taxon>
        <taxon>Ectothiorhodospiraceae</taxon>
        <taxon>Halorhodospira</taxon>
    </lineage>
</organism>
<comment type="function">
    <text evidence="1">Catalyzes the pyruvoyl-dependent decarboxylation of aspartate to produce beta-alanine.</text>
</comment>
<comment type="catalytic activity">
    <reaction evidence="1">
        <text>L-aspartate + H(+) = beta-alanine + CO2</text>
        <dbReference type="Rhea" id="RHEA:19497"/>
        <dbReference type="ChEBI" id="CHEBI:15378"/>
        <dbReference type="ChEBI" id="CHEBI:16526"/>
        <dbReference type="ChEBI" id="CHEBI:29991"/>
        <dbReference type="ChEBI" id="CHEBI:57966"/>
        <dbReference type="EC" id="4.1.1.11"/>
    </reaction>
</comment>
<comment type="cofactor">
    <cofactor evidence="1">
        <name>pyruvate</name>
        <dbReference type="ChEBI" id="CHEBI:15361"/>
    </cofactor>
    <text evidence="1">Binds 1 pyruvoyl group covalently per subunit.</text>
</comment>
<comment type="pathway">
    <text evidence="1">Cofactor biosynthesis; (R)-pantothenate biosynthesis; beta-alanine from L-aspartate: step 1/1.</text>
</comment>
<comment type="subunit">
    <text evidence="1">Heterooctamer of four alpha and four beta subunits.</text>
</comment>
<comment type="subcellular location">
    <subcellularLocation>
        <location evidence="1">Cytoplasm</location>
    </subcellularLocation>
</comment>
<comment type="PTM">
    <text evidence="1">Is synthesized initially as an inactive proenzyme, which is activated by self-cleavage at a specific serine bond to produce a beta-subunit with a hydroxyl group at its C-terminus and an alpha-subunit with a pyruvoyl group at its N-terminus.</text>
</comment>
<comment type="similarity">
    <text evidence="1">Belongs to the PanD family.</text>
</comment>
<accession>A1WUU3</accession>